<evidence type="ECO:0000250" key="1"/>
<evidence type="ECO:0000255" key="2">
    <source>
        <dbReference type="PROSITE-ProRule" id="PRU01082"/>
    </source>
</evidence>
<evidence type="ECO:0000256" key="3">
    <source>
        <dbReference type="SAM" id="MobiDB-lite"/>
    </source>
</evidence>
<evidence type="ECO:0000305" key="4"/>
<reference key="1">
    <citation type="journal article" date="2004" name="Nucleic Acids Res.">
        <title>Whole genome comparisons of serotype 4b and 1/2a strains of the food-borne pathogen Listeria monocytogenes reveal new insights into the core genome components of this species.</title>
        <authorList>
            <person name="Nelson K.E."/>
            <person name="Fouts D.E."/>
            <person name="Mongodin E.F."/>
            <person name="Ravel J."/>
            <person name="DeBoy R.T."/>
            <person name="Kolonay J.F."/>
            <person name="Rasko D.A."/>
            <person name="Angiuoli S.V."/>
            <person name="Gill S.R."/>
            <person name="Paulsen I.T."/>
            <person name="Peterson J.D."/>
            <person name="White O."/>
            <person name="Nelson W.C."/>
            <person name="Nierman W.C."/>
            <person name="Beanan M.J."/>
            <person name="Brinkac L.M."/>
            <person name="Daugherty S.C."/>
            <person name="Dodson R.J."/>
            <person name="Durkin A.S."/>
            <person name="Madupu R."/>
            <person name="Haft D.H."/>
            <person name="Selengut J."/>
            <person name="Van Aken S.E."/>
            <person name="Khouri H.M."/>
            <person name="Fedorova N."/>
            <person name="Forberger H.A."/>
            <person name="Tran B."/>
            <person name="Kathariou S."/>
            <person name="Wonderling L.D."/>
            <person name="Uhlich G.A."/>
            <person name="Bayles D.O."/>
            <person name="Luchansky J.B."/>
            <person name="Fraser C.M."/>
        </authorList>
    </citation>
    <scope>NUCLEOTIDE SEQUENCE [LARGE SCALE GENOMIC DNA]</scope>
    <source>
        <strain>F2365</strain>
    </source>
</reference>
<organism>
    <name type="scientific">Listeria monocytogenes serotype 4b (strain F2365)</name>
    <dbReference type="NCBI Taxonomy" id="265669"/>
    <lineage>
        <taxon>Bacteria</taxon>
        <taxon>Bacillati</taxon>
        <taxon>Bacillota</taxon>
        <taxon>Bacilli</taxon>
        <taxon>Bacillales</taxon>
        <taxon>Listeriaceae</taxon>
        <taxon>Listeria</taxon>
    </lineage>
</organism>
<gene>
    <name type="primary">stp</name>
    <name type="ordered locus">LMOf2365_1849</name>
</gene>
<feature type="chain" id="PRO_0000363064" description="Serine/threonine phosphatase stp">
    <location>
        <begin position="1"/>
        <end position="252"/>
    </location>
</feature>
<feature type="domain" description="PPM-type phosphatase" evidence="2">
    <location>
        <begin position="2"/>
        <end position="242"/>
    </location>
</feature>
<feature type="region of interest" description="Disordered" evidence="3">
    <location>
        <begin position="1"/>
        <end position="23"/>
    </location>
</feature>
<feature type="compositionally biased region" description="Basic and acidic residues" evidence="3">
    <location>
        <begin position="1"/>
        <end position="18"/>
    </location>
</feature>
<feature type="binding site" evidence="1">
    <location>
        <position position="36"/>
    </location>
    <ligand>
        <name>Mn(2+)</name>
        <dbReference type="ChEBI" id="CHEBI:29035"/>
        <label>1</label>
    </ligand>
</feature>
<feature type="binding site" evidence="1">
    <location>
        <position position="36"/>
    </location>
    <ligand>
        <name>Mn(2+)</name>
        <dbReference type="ChEBI" id="CHEBI:29035"/>
        <label>2</label>
    </ligand>
</feature>
<feature type="binding site" evidence="1">
    <location>
        <position position="37"/>
    </location>
    <ligand>
        <name>Mn(2+)</name>
        <dbReference type="ChEBI" id="CHEBI:29035"/>
        <label>1</label>
    </ligand>
</feature>
<feature type="binding site" evidence="1">
    <location>
        <position position="194"/>
    </location>
    <ligand>
        <name>Mn(2+)</name>
        <dbReference type="ChEBI" id="CHEBI:29035"/>
        <label>2</label>
    </ligand>
</feature>
<feature type="binding site" evidence="1">
    <location>
        <position position="233"/>
    </location>
    <ligand>
        <name>Mn(2+)</name>
        <dbReference type="ChEBI" id="CHEBI:29035"/>
        <label>2</label>
    </ligand>
</feature>
<name>STP1_LISMF</name>
<accession>Q71YJ5</accession>
<keyword id="KW-0963">Cytoplasm</keyword>
<keyword id="KW-0378">Hydrolase</keyword>
<keyword id="KW-0464">Manganese</keyword>
<keyword id="KW-0472">Membrane</keyword>
<keyword id="KW-0479">Metal-binding</keyword>
<keyword id="KW-0904">Protein phosphatase</keyword>
<sequence>MHAEFRTDRGRIRHHNEDNGGVFENKDNQPIVIVADGMGGHRAGDVASEMAVRLLSDAWKETTALLTAEEIETWLQKTIQEVNKEIVLYSESEMDLNGMGTTLVAAIMAQSQVVIANVGDSRGYLLQNHVLRQLTEDHSLVHELLRTGEISKEDAMNHPRKNILLRALGVEGKVEVDTFVVPFQTSDTLLLCSDGLTNMVPETEMEEILKSKRTLSEKADVFITKANSYGGEDNITVLLVERDLTQKGRDAS</sequence>
<protein>
    <recommendedName>
        <fullName>Serine/threonine phosphatase stp</fullName>
        <ecNumber>3.1.3.16</ecNumber>
    </recommendedName>
</protein>
<comment type="function">
    <text evidence="1">Protein phosphatase that dephosphorylates EF-Tu.</text>
</comment>
<comment type="catalytic activity">
    <reaction>
        <text>O-phospho-L-seryl-[protein] + H2O = L-seryl-[protein] + phosphate</text>
        <dbReference type="Rhea" id="RHEA:20629"/>
        <dbReference type="Rhea" id="RHEA-COMP:9863"/>
        <dbReference type="Rhea" id="RHEA-COMP:11604"/>
        <dbReference type="ChEBI" id="CHEBI:15377"/>
        <dbReference type="ChEBI" id="CHEBI:29999"/>
        <dbReference type="ChEBI" id="CHEBI:43474"/>
        <dbReference type="ChEBI" id="CHEBI:83421"/>
        <dbReference type="EC" id="3.1.3.16"/>
    </reaction>
</comment>
<comment type="catalytic activity">
    <reaction>
        <text>O-phospho-L-threonyl-[protein] + H2O = L-threonyl-[protein] + phosphate</text>
        <dbReference type="Rhea" id="RHEA:47004"/>
        <dbReference type="Rhea" id="RHEA-COMP:11060"/>
        <dbReference type="Rhea" id="RHEA-COMP:11605"/>
        <dbReference type="ChEBI" id="CHEBI:15377"/>
        <dbReference type="ChEBI" id="CHEBI:30013"/>
        <dbReference type="ChEBI" id="CHEBI:43474"/>
        <dbReference type="ChEBI" id="CHEBI:61977"/>
        <dbReference type="EC" id="3.1.3.16"/>
    </reaction>
</comment>
<comment type="cofactor">
    <cofactor evidence="1">
        <name>Mn(2+)</name>
        <dbReference type="ChEBI" id="CHEBI:29035"/>
    </cofactor>
    <text evidence="1">Binds 2 manganese ions per subunit.</text>
</comment>
<comment type="subcellular location">
    <subcellularLocation>
        <location>Cytoplasm</location>
    </subcellularLocation>
    <subcellularLocation>
        <location evidence="1">Membrane</location>
        <topology evidence="1">Peripheral membrane protein</topology>
    </subcellularLocation>
</comment>
<comment type="similarity">
    <text evidence="4">Belongs to the PP2C family.</text>
</comment>
<dbReference type="EC" id="3.1.3.16"/>
<dbReference type="EMBL" id="AE017262">
    <property type="protein sequence ID" value="AAT04619.1"/>
    <property type="molecule type" value="Genomic_DNA"/>
</dbReference>
<dbReference type="RefSeq" id="WP_003725654.1">
    <property type="nucleotide sequence ID" value="NC_002973.6"/>
</dbReference>
<dbReference type="SMR" id="Q71YJ5"/>
<dbReference type="KEGG" id="lmf:LMOf2365_1849"/>
<dbReference type="HOGENOM" id="CLU_034545_4_1_9"/>
<dbReference type="GO" id="GO:0005737">
    <property type="term" value="C:cytoplasm"/>
    <property type="evidence" value="ECO:0007669"/>
    <property type="project" value="UniProtKB-SubCell"/>
</dbReference>
<dbReference type="GO" id="GO:0016020">
    <property type="term" value="C:membrane"/>
    <property type="evidence" value="ECO:0007669"/>
    <property type="project" value="UniProtKB-SubCell"/>
</dbReference>
<dbReference type="GO" id="GO:0046872">
    <property type="term" value="F:metal ion binding"/>
    <property type="evidence" value="ECO:0007669"/>
    <property type="project" value="UniProtKB-KW"/>
</dbReference>
<dbReference type="GO" id="GO:0004722">
    <property type="term" value="F:protein serine/threonine phosphatase activity"/>
    <property type="evidence" value="ECO:0007669"/>
    <property type="project" value="UniProtKB-EC"/>
</dbReference>
<dbReference type="CDD" id="cd00143">
    <property type="entry name" value="PP2Cc"/>
    <property type="match status" value="1"/>
</dbReference>
<dbReference type="FunFam" id="3.60.40.10:FF:000002">
    <property type="entry name" value="Serine/threonine phosphatase stp"/>
    <property type="match status" value="1"/>
</dbReference>
<dbReference type="Gene3D" id="3.60.40.10">
    <property type="entry name" value="PPM-type phosphatase domain"/>
    <property type="match status" value="1"/>
</dbReference>
<dbReference type="InterPro" id="IPR015655">
    <property type="entry name" value="PP2C"/>
</dbReference>
<dbReference type="InterPro" id="IPR036457">
    <property type="entry name" value="PPM-type-like_dom_sf"/>
</dbReference>
<dbReference type="InterPro" id="IPR001932">
    <property type="entry name" value="PPM-type_phosphatase-like_dom"/>
</dbReference>
<dbReference type="NCBIfam" id="NF033484">
    <property type="entry name" value="Stp1_PP2C_phos"/>
    <property type="match status" value="1"/>
</dbReference>
<dbReference type="PANTHER" id="PTHR47992">
    <property type="entry name" value="PROTEIN PHOSPHATASE"/>
    <property type="match status" value="1"/>
</dbReference>
<dbReference type="Pfam" id="PF13672">
    <property type="entry name" value="PP2C_2"/>
    <property type="match status" value="1"/>
</dbReference>
<dbReference type="SMART" id="SM00331">
    <property type="entry name" value="PP2C_SIG"/>
    <property type="match status" value="1"/>
</dbReference>
<dbReference type="SMART" id="SM00332">
    <property type="entry name" value="PP2Cc"/>
    <property type="match status" value="1"/>
</dbReference>
<dbReference type="SUPFAM" id="SSF81606">
    <property type="entry name" value="PP2C-like"/>
    <property type="match status" value="1"/>
</dbReference>
<dbReference type="PROSITE" id="PS51746">
    <property type="entry name" value="PPM_2"/>
    <property type="match status" value="1"/>
</dbReference>
<proteinExistence type="inferred from homology"/>